<dbReference type="EMBL" id="AF041377">
    <property type="protein sequence ID" value="AAC34986.1"/>
    <property type="molecule type" value="mRNA"/>
</dbReference>
<dbReference type="EMBL" id="BC012664">
    <property type="protein sequence ID" value="AAH12664.1"/>
    <property type="molecule type" value="mRNA"/>
</dbReference>
<dbReference type="EMBL" id="BC046340">
    <property type="protein sequence ID" value="AAH46340.1"/>
    <property type="molecule type" value="mRNA"/>
</dbReference>
<dbReference type="CCDS" id="CCDS27127.1"/>
<dbReference type="RefSeq" id="NP_034024.2">
    <property type="nucleotide sequence ID" value="NM_009894.3"/>
</dbReference>
<dbReference type="SMR" id="O70303"/>
<dbReference type="FunCoup" id="O70303">
    <property type="interactions" value="204"/>
</dbReference>
<dbReference type="STRING" id="10090.ENSMUSP00000001497"/>
<dbReference type="iPTMnet" id="O70303"/>
<dbReference type="PhosphoSitePlus" id="O70303"/>
<dbReference type="jPOST" id="O70303"/>
<dbReference type="PaxDb" id="10090-ENSMUSP00000001497"/>
<dbReference type="ProteomicsDB" id="283556"/>
<dbReference type="Antibodypedia" id="9150">
    <property type="antibodies" value="326 antibodies from 35 providers"/>
</dbReference>
<dbReference type="DNASU" id="12684"/>
<dbReference type="Ensembl" id="ENSMUST00000001497.9">
    <property type="protein sequence ID" value="ENSMUSP00000001497.8"/>
    <property type="gene ID" value="ENSMUSG00000022219.11"/>
</dbReference>
<dbReference type="GeneID" id="12684"/>
<dbReference type="KEGG" id="mmu:12684"/>
<dbReference type="UCSC" id="uc007uap.2">
    <property type="organism name" value="mouse"/>
</dbReference>
<dbReference type="AGR" id="MGI:1270844"/>
<dbReference type="CTD" id="27141"/>
<dbReference type="MGI" id="MGI:1270844">
    <property type="gene designation" value="Cideb"/>
</dbReference>
<dbReference type="VEuPathDB" id="HostDB:ENSMUSG00000022219"/>
<dbReference type="eggNOG" id="ENOG502RUS7">
    <property type="taxonomic scope" value="Eukaryota"/>
</dbReference>
<dbReference type="GeneTree" id="ENSGT00390000018596"/>
<dbReference type="HOGENOM" id="CLU_090011_0_0_1"/>
<dbReference type="InParanoid" id="O70303"/>
<dbReference type="OMA" id="PFRICCN"/>
<dbReference type="OrthoDB" id="6475906at2759"/>
<dbReference type="PhylomeDB" id="O70303"/>
<dbReference type="TreeFam" id="TF334321"/>
<dbReference type="BioGRID-ORCS" id="12684">
    <property type="hits" value="4 hits in 77 CRISPR screens"/>
</dbReference>
<dbReference type="ChiTaRS" id="Cideb">
    <property type="organism name" value="mouse"/>
</dbReference>
<dbReference type="PRO" id="PR:O70303"/>
<dbReference type="Proteomes" id="UP000000589">
    <property type="component" value="Chromosome 14"/>
</dbReference>
<dbReference type="RNAct" id="O70303">
    <property type="molecule type" value="protein"/>
</dbReference>
<dbReference type="Bgee" id="ENSMUSG00000022219">
    <property type="expression patterns" value="Expressed in small intestine Peyer's patch and 102 other cell types or tissues"/>
</dbReference>
<dbReference type="GO" id="GO:0030137">
    <property type="term" value="C:COPI-coated vesicle"/>
    <property type="evidence" value="ECO:0007669"/>
    <property type="project" value="UniProtKB-SubCell"/>
</dbReference>
<dbReference type="GO" id="GO:0030127">
    <property type="term" value="C:COPII vesicle coat"/>
    <property type="evidence" value="ECO:0000314"/>
    <property type="project" value="UniProtKB"/>
</dbReference>
<dbReference type="GO" id="GO:0005829">
    <property type="term" value="C:cytosol"/>
    <property type="evidence" value="ECO:0000266"/>
    <property type="project" value="MGI"/>
</dbReference>
<dbReference type="GO" id="GO:0005783">
    <property type="term" value="C:endoplasmic reticulum"/>
    <property type="evidence" value="ECO:0000314"/>
    <property type="project" value="UniProtKB"/>
</dbReference>
<dbReference type="GO" id="GO:0005789">
    <property type="term" value="C:endoplasmic reticulum membrane"/>
    <property type="evidence" value="ECO:0000314"/>
    <property type="project" value="UniProtKB"/>
</dbReference>
<dbReference type="GO" id="GO:0005794">
    <property type="term" value="C:Golgi apparatus"/>
    <property type="evidence" value="ECO:0000314"/>
    <property type="project" value="UniProtKB"/>
</dbReference>
<dbReference type="GO" id="GO:0005811">
    <property type="term" value="C:lipid droplet"/>
    <property type="evidence" value="ECO:0000314"/>
    <property type="project" value="UniProtKB"/>
</dbReference>
<dbReference type="GO" id="GO:0048471">
    <property type="term" value="C:perinuclear region of cytoplasm"/>
    <property type="evidence" value="ECO:0007669"/>
    <property type="project" value="Ensembl"/>
</dbReference>
<dbReference type="GO" id="GO:0042802">
    <property type="term" value="F:identical protein binding"/>
    <property type="evidence" value="ECO:0007669"/>
    <property type="project" value="Ensembl"/>
</dbReference>
<dbReference type="GO" id="GO:0120013">
    <property type="term" value="F:lipid transfer activity"/>
    <property type="evidence" value="ECO:0000314"/>
    <property type="project" value="UniProtKB"/>
</dbReference>
<dbReference type="GO" id="GO:0060090">
    <property type="term" value="F:molecular adaptor activity"/>
    <property type="evidence" value="ECO:0000314"/>
    <property type="project" value="UniProtKB"/>
</dbReference>
<dbReference type="GO" id="GO:0070300">
    <property type="term" value="F:phosphatidic acid binding"/>
    <property type="evidence" value="ECO:0000314"/>
    <property type="project" value="UniProtKB"/>
</dbReference>
<dbReference type="GO" id="GO:0006915">
    <property type="term" value="P:apoptotic process"/>
    <property type="evidence" value="ECO:0000266"/>
    <property type="project" value="MGI"/>
</dbReference>
<dbReference type="GO" id="GO:0090110">
    <property type="term" value="P:COPII-coated vesicle cargo loading"/>
    <property type="evidence" value="ECO:0000314"/>
    <property type="project" value="UniProtKB"/>
</dbReference>
<dbReference type="GO" id="GO:0097194">
    <property type="term" value="P:execution phase of apoptosis"/>
    <property type="evidence" value="ECO:0000314"/>
    <property type="project" value="BHF-UCL"/>
</dbReference>
<dbReference type="GO" id="GO:0160077">
    <property type="term" value="P:lipid droplet fusion"/>
    <property type="evidence" value="ECO:0000314"/>
    <property type="project" value="UniProtKB"/>
</dbReference>
<dbReference type="GO" id="GO:0019915">
    <property type="term" value="P:lipid storage"/>
    <property type="evidence" value="ECO:0000314"/>
    <property type="project" value="UniProtKB"/>
</dbReference>
<dbReference type="GO" id="GO:0043065">
    <property type="term" value="P:positive regulation of apoptotic process"/>
    <property type="evidence" value="ECO:0007669"/>
    <property type="project" value="Ensembl"/>
</dbReference>
<dbReference type="GO" id="GO:0090207">
    <property type="term" value="P:regulation of triglyceride metabolic process"/>
    <property type="evidence" value="ECO:0000314"/>
    <property type="project" value="UniProtKB"/>
</dbReference>
<dbReference type="GO" id="GO:0034379">
    <property type="term" value="P:very-low-density lipoprotein particle assembly"/>
    <property type="evidence" value="ECO:0000314"/>
    <property type="project" value="UniProtKB"/>
</dbReference>
<dbReference type="CDD" id="cd06537">
    <property type="entry name" value="CIDE_N_B"/>
    <property type="match status" value="1"/>
</dbReference>
<dbReference type="FunFam" id="3.10.20.10:FF:000005">
    <property type="entry name" value="Cell death activator CIDE-B"/>
    <property type="match status" value="1"/>
</dbReference>
<dbReference type="Gene3D" id="3.10.20.10">
    <property type="match status" value="1"/>
</dbReference>
<dbReference type="InterPro" id="IPR003508">
    <property type="entry name" value="CIDE-N_dom"/>
</dbReference>
<dbReference type="PANTHER" id="PTHR12306">
    <property type="entry name" value="CELL DEATH ACTIVATOR CIDE"/>
    <property type="match status" value="1"/>
</dbReference>
<dbReference type="PANTHER" id="PTHR12306:SF10">
    <property type="entry name" value="LIPID TRANSFERASE CIDEB"/>
    <property type="match status" value="1"/>
</dbReference>
<dbReference type="Pfam" id="PF02017">
    <property type="entry name" value="CIDE-N"/>
    <property type="match status" value="1"/>
</dbReference>
<dbReference type="SMART" id="SM00266">
    <property type="entry name" value="CAD"/>
    <property type="match status" value="1"/>
</dbReference>
<dbReference type="SUPFAM" id="SSF54277">
    <property type="entry name" value="CAD &amp; PB1 domains"/>
    <property type="match status" value="1"/>
</dbReference>
<dbReference type="PROSITE" id="PS51135">
    <property type="entry name" value="CIDE_N"/>
    <property type="match status" value="1"/>
</dbReference>
<evidence type="ECO:0000250" key="1">
    <source>
        <dbReference type="UniProtKB" id="P56198"/>
    </source>
</evidence>
<evidence type="ECO:0000250" key="2">
    <source>
        <dbReference type="UniProtKB" id="Q9UHD4"/>
    </source>
</evidence>
<evidence type="ECO:0000255" key="3">
    <source>
        <dbReference type="PROSITE-ProRule" id="PRU00447"/>
    </source>
</evidence>
<evidence type="ECO:0000269" key="4">
    <source>
    </source>
</evidence>
<evidence type="ECO:0000269" key="5">
    <source>
    </source>
</evidence>
<evidence type="ECO:0000269" key="6">
    <source>
    </source>
</evidence>
<evidence type="ECO:0000269" key="7">
    <source>
    </source>
</evidence>
<evidence type="ECO:0000269" key="8">
    <source>
    </source>
</evidence>
<evidence type="ECO:0000269" key="9">
    <source>
    </source>
</evidence>
<evidence type="ECO:0000303" key="10">
    <source>
    </source>
</evidence>
<evidence type="ECO:0000303" key="11">
    <source>
    </source>
</evidence>
<evidence type="ECO:0000305" key="12"/>
<evidence type="ECO:0000312" key="13">
    <source>
        <dbReference type="MGI" id="MGI:1270844"/>
    </source>
</evidence>
<evidence type="ECO:0007744" key="14">
    <source>
    </source>
</evidence>
<accession>O70303</accession>
<accession>Q91X39</accession>
<proteinExistence type="evidence at protein level"/>
<keyword id="KW-0053">Apoptosis</keyword>
<keyword id="KW-0968">Cytoplasmic vesicle</keyword>
<keyword id="KW-0256">Endoplasmic reticulum</keyword>
<keyword id="KW-0333">Golgi apparatus</keyword>
<keyword id="KW-0551">Lipid droplet</keyword>
<keyword id="KW-0472">Membrane</keyword>
<keyword id="KW-0597">Phosphoprotein</keyword>
<keyword id="KW-1185">Reference proteome</keyword>
<feature type="chain" id="PRO_0000144721" description="Lipid transferase CIDEB">
    <location>
        <begin position="1"/>
        <end position="219"/>
    </location>
</feature>
<feature type="domain" description="CIDE-N" evidence="3">
    <location>
        <begin position="34"/>
        <end position="110"/>
    </location>
</feature>
<feature type="modified residue" description="Phosphothreonine" evidence="14">
    <location>
        <position position="18"/>
    </location>
</feature>
<feature type="mutagenesis site" description="Abolished interaction with PREB." evidence="8">
    <original>K</original>
    <variation>A</variation>
    <location>
        <position position="128"/>
    </location>
</feature>
<feature type="sequence conflict" description="In Ref. 1; AAC34986." evidence="12" ref="1">
    <original>W</original>
    <variation>G</variation>
    <location>
        <position position="180"/>
    </location>
</feature>
<feature type="sequence conflict" description="In Ref. 1; AAC34986." evidence="12" ref="1">
    <original>L</original>
    <variation>Q</variation>
    <location>
        <position position="184"/>
    </location>
</feature>
<comment type="function">
    <text evidence="1 5 6 7 8 9">Lipid transferase specifically expressed in hepatocytes, which promotes unilocular lipid droplet formation by mediating lipid droplet fusion (PubMed:26733203). Lipid droplet fusion promotes their enlargement, restricting lipolysis and favoring lipid storage (PubMed:26733203). Localizes on the lipid droplet surface, at focal contact sites between lipid droplets, and mediates atypical lipid droplet fusion by promoting directional net neutral lipid transfer from the smaller to larger lipid droplets (By similarity). The transfer direction may be driven by the internal pressure difference between the contacting lipid droplet pair (By similarity). Promotes lipid exchange and lipid droplet fusion in both small and large lipid droplet-containing hepatocytes (PubMed:26733203). In addition to its role in lipid droplet fusion, also involved in cytoplasmic vesicle biogenesis and transport (PubMed:19187774, PubMed:23297397, PubMed:30858281). Required for very-low-density lipoprotein (VLDL) lipidation and maturation (PubMed:19187774, PubMed:23297397). Probably involved in the biogenesis of VLDL transport vesicles by forming a COPII vesicle coat and facilitating the formation of endoplasmic reticulum-derived large vesicles (PubMed:23297397). Also involved in sterol-regulated export of the SCAP-SREBP complex, composed of SCAP, SREBF1/SREBP1 and SREBF2/SREBP2, by promoting loading of SCAP-SREBP into COPII vesicles (PubMed:30858281). May also activate apoptosis (PubMed:9564035).</text>
</comment>
<comment type="subunit">
    <text evidence="2 5 6 8">Interacts with DFFA (By similarity). Interacts with DFFB; inhibited by DFFB (By similarity). Interacts with APOB (PubMed:19187774, PubMed:23297397). Interacts with PREB/SEC12; facilitating loading of SCAP-SREBP into COPII vesicles (PubMed:30858281).</text>
</comment>
<comment type="subcellular location">
    <subcellularLocation>
        <location evidence="5 7">Lipid droplet</location>
    </subcellularLocation>
    <subcellularLocation>
        <location evidence="5 6">Endoplasmic reticulum membrane</location>
        <topology evidence="5">Peripheral membrane protein</topology>
        <orientation evidence="5">Cytoplasmic side</orientation>
    </subcellularLocation>
    <subcellularLocation>
        <location evidence="6">Golgi apparatus</location>
    </subcellularLocation>
    <subcellularLocation>
        <location evidence="6 8">Cytoplasmic vesicle</location>
        <location evidence="6 8">COPI-coated vesicle</location>
    </subcellularLocation>
    <text evidence="7">Enriched at lipid droplet contact sites.</text>
</comment>
<comment type="tissue specificity">
    <text evidence="4">Highly enriched in the liver.</text>
</comment>
<comment type="disruption phenotype">
    <text evidence="4 5">Mice display lower levels of plasma triglycerides and free fatty acids and show smaller lipid droplets in hepatocytes (PubMed:17646209, PubMed:19187774). Mice are resistant to high-fat diet-induced obesity and are protected against hepatic steatosis (PubMed:17646209). Mice also show decreased very-low-density lipoprotein (VLDL)-triacylglycerol secretion and reduced VLDL size (PubMed:19187774).</text>
</comment>
<comment type="similarity">
    <text evidence="12">Belongs to the CIDE family.</text>
</comment>
<name>CIDEB_MOUSE</name>
<protein>
    <recommendedName>
        <fullName evidence="12">Lipid transferase CIDEB</fullName>
    </recommendedName>
    <alternativeName>
        <fullName evidence="11">Cell death activator CIDE-B</fullName>
    </alternativeName>
    <alternativeName>
        <fullName evidence="11">Cell death-inducing DFFA-like effector B</fullName>
    </alternativeName>
</protein>
<sequence>MEYLSAFNPNGLLRSVSTVSSELSRRVWNSAPPPQRPFRVCDHKRTVRKGLTAASLQELLDKVLETLLLRGVLTLVLEEDGTAVDSEDFFQLLEDDTCLMVLEQGQSWSPKSGMLSYGLGREKPKHSKDIARITFDVYKQNPRDLFGSLNVKATFYGLYSMSCDFQGVGPKRVLRELLRWTSSLLQGLGHMLLGISSTLRHVVEGADRWQWHGQRHLHS</sequence>
<gene>
    <name evidence="10 13" type="primary">Cideb</name>
</gene>
<organism>
    <name type="scientific">Mus musculus</name>
    <name type="common">Mouse</name>
    <dbReference type="NCBI Taxonomy" id="10090"/>
    <lineage>
        <taxon>Eukaryota</taxon>
        <taxon>Metazoa</taxon>
        <taxon>Chordata</taxon>
        <taxon>Craniata</taxon>
        <taxon>Vertebrata</taxon>
        <taxon>Euteleostomi</taxon>
        <taxon>Mammalia</taxon>
        <taxon>Eutheria</taxon>
        <taxon>Euarchontoglires</taxon>
        <taxon>Glires</taxon>
        <taxon>Rodentia</taxon>
        <taxon>Myomorpha</taxon>
        <taxon>Muroidea</taxon>
        <taxon>Muridae</taxon>
        <taxon>Murinae</taxon>
        <taxon>Mus</taxon>
        <taxon>Mus</taxon>
    </lineage>
</organism>
<reference key="1">
    <citation type="journal article" date="1998" name="EMBO J.">
        <title>CIDE, a novel family of cell death activators with homology to the 45 kDa subunit of the DNA fragmentation factor.</title>
        <authorList>
            <person name="Inohara N."/>
            <person name="Koseki T."/>
            <person name="Chen S."/>
            <person name="Wu X."/>
            <person name="Nunez G."/>
        </authorList>
    </citation>
    <scope>NUCLEOTIDE SEQUENCE [MRNA]</scope>
    <scope>FUNCTION</scope>
</reference>
<reference key="2">
    <citation type="journal article" date="2004" name="Genome Res.">
        <title>The status, quality, and expansion of the NIH full-length cDNA project: the Mammalian Gene Collection (MGC).</title>
        <authorList>
            <consortium name="The MGC Project Team"/>
        </authorList>
    </citation>
    <scope>NUCLEOTIDE SEQUENCE [LARGE SCALE MRNA]</scope>
    <source>
        <strain>FVB/N</strain>
        <tissue>Colon</tissue>
    </source>
</reference>
<reference key="3">
    <citation type="journal article" date="2007" name="Diabetes">
        <title>Cideb regulates diet-induced obesity, liver steatosis, and insulin sensitivity by controlling lipogenesis and fatty acid oxidation.</title>
        <authorList>
            <person name="Li J.Z."/>
            <person name="Ye J."/>
            <person name="Xue B."/>
            <person name="Qi J."/>
            <person name="Zhang J."/>
            <person name="Zhou Z."/>
            <person name="Li Q."/>
            <person name="Wen Z."/>
            <person name="Li P."/>
        </authorList>
    </citation>
    <scope>DISRUPTION PHENOTYPE</scope>
    <scope>TISSUE SPECIFICITY</scope>
</reference>
<reference key="4">
    <citation type="journal article" date="2007" name="Proc. Natl. Acad. Sci. U.S.A.">
        <title>Large-scale phosphorylation analysis of mouse liver.</title>
        <authorList>
            <person name="Villen J."/>
            <person name="Beausoleil S.A."/>
            <person name="Gerber S.A."/>
            <person name="Gygi S.P."/>
        </authorList>
    </citation>
    <scope>PHOSPHORYLATION [LARGE SCALE ANALYSIS] AT THR-18</scope>
    <scope>IDENTIFICATION BY MASS SPECTROMETRY [LARGE SCALE ANALYSIS]</scope>
    <source>
        <tissue>Liver</tissue>
    </source>
</reference>
<reference key="5">
    <citation type="journal article" date="2009" name="Cell Metab.">
        <title>Cideb, an ER- and lipid droplet-associated protein, mediates VLDL lipidation and maturation by interacting with apolipoprotein B.</title>
        <authorList>
            <person name="Ye J."/>
            <person name="Li J.Z."/>
            <person name="Liu Y."/>
            <person name="Li X."/>
            <person name="Yang T."/>
            <person name="Ma X."/>
            <person name="Li Q."/>
            <person name="Yao Z."/>
            <person name="Li P."/>
        </authorList>
    </citation>
    <scope>FUNCTION</scope>
    <scope>SUBCELLULAR LOCATION</scope>
    <scope>TOPOLOGY</scope>
    <scope>INTERACTION WITH APOB</scope>
    <scope>DISRUPTION PHENOTYPE</scope>
</reference>
<reference key="6">
    <citation type="journal article" date="2010" name="Cell">
        <title>A tissue-specific atlas of mouse protein phosphorylation and expression.</title>
        <authorList>
            <person name="Huttlin E.L."/>
            <person name="Jedrychowski M.P."/>
            <person name="Elias J.E."/>
            <person name="Goswami T."/>
            <person name="Rad R."/>
            <person name="Beausoleil S.A."/>
            <person name="Villen J."/>
            <person name="Haas W."/>
            <person name="Sowa M.E."/>
            <person name="Gygi S.P."/>
        </authorList>
    </citation>
    <scope>IDENTIFICATION BY MASS SPECTROMETRY [LARGE SCALE ANALYSIS]</scope>
    <source>
        <tissue>Liver</tissue>
    </source>
</reference>
<reference key="7">
    <citation type="journal article" date="2013" name="J. Biol. Chem.">
        <title>CideB protein is required for the biogenesis of very low density lipoprotein (VLDL) transport vesicle.</title>
        <authorList>
            <person name="Tiwari S."/>
            <person name="Siddiqi S."/>
            <person name="Siddiqi S.A."/>
        </authorList>
    </citation>
    <scope>FUNCTION</scope>
    <scope>SUBCELLULAR LOCATION</scope>
    <scope>INTERACTION WITH APOB</scope>
</reference>
<reference key="8">
    <citation type="journal article" date="2016" name="J. Biol. Chem.">
        <title>Differential roles of cell death-inducing DNA fragmentation factor-alpha-like effector (CIDE) proteins in promoting lipid droplet fusion and growth in subpopulations of hepatocytes.</title>
        <authorList>
            <person name="Xu W."/>
            <person name="Wu L."/>
            <person name="Yu M."/>
            <person name="Chen F.J."/>
            <person name="Arshad M."/>
            <person name="Xia X."/>
            <person name="Ren H."/>
            <person name="Yu J."/>
            <person name="Xu L."/>
            <person name="Xu D."/>
            <person name="Li J.Z."/>
            <person name="Li P."/>
            <person name="Zhou L."/>
        </authorList>
    </citation>
    <scope>FUNCTION</scope>
    <scope>SUBCELLULAR LOCATION</scope>
</reference>
<reference key="9">
    <citation type="journal article" date="2019" name="EMBO J.">
        <title>Cideb controls sterol-regulated ER export of SREBP/SCAP by promoting cargo loading at ER exit sites.</title>
        <authorList>
            <person name="Su L."/>
            <person name="Zhou L."/>
            <person name="Chen F.J."/>
            <person name="Wang H."/>
            <person name="Qian H."/>
            <person name="Sheng Y."/>
            <person name="Zhu Y."/>
            <person name="Yu H."/>
            <person name="Gong X."/>
            <person name="Cai L."/>
            <person name="Yang X."/>
            <person name="Xu L."/>
            <person name="Zhao T.J."/>
            <person name="Li J.Z."/>
            <person name="Chen X.W."/>
            <person name="Li P."/>
        </authorList>
    </citation>
    <scope>FUNCTION</scope>
    <scope>SUBCELLULAR LOCATION</scope>
    <scope>INTERACTION WITH PREB</scope>
    <scope>MUTAGENESIS OF LYS-128</scope>
</reference>